<feature type="chain" id="PRO_1000083521" description="DNA mismatch repair protein MutH">
    <location>
        <begin position="1"/>
        <end position="231"/>
    </location>
</feature>
<keyword id="KW-0963">Cytoplasm</keyword>
<keyword id="KW-0227">DNA damage</keyword>
<keyword id="KW-0234">DNA repair</keyword>
<keyword id="KW-0255">Endonuclease</keyword>
<keyword id="KW-0378">Hydrolase</keyword>
<keyword id="KW-0540">Nuclease</keyword>
<evidence type="ECO:0000255" key="1">
    <source>
        <dbReference type="HAMAP-Rule" id="MF_00759"/>
    </source>
</evidence>
<organism>
    <name type="scientific">Salmonella paratyphi B (strain ATCC BAA-1250 / SPB7)</name>
    <dbReference type="NCBI Taxonomy" id="1016998"/>
    <lineage>
        <taxon>Bacteria</taxon>
        <taxon>Pseudomonadati</taxon>
        <taxon>Pseudomonadota</taxon>
        <taxon>Gammaproteobacteria</taxon>
        <taxon>Enterobacterales</taxon>
        <taxon>Enterobacteriaceae</taxon>
        <taxon>Salmonella</taxon>
    </lineage>
</organism>
<protein>
    <recommendedName>
        <fullName evidence="1">DNA mismatch repair protein MutH</fullName>
    </recommendedName>
    <alternativeName>
        <fullName evidence="1">Methyl-directed mismatch repair protein</fullName>
    </alternativeName>
</protein>
<proteinExistence type="inferred from homology"/>
<gene>
    <name evidence="1" type="primary">mutH</name>
    <name type="ordered locus">SPAB_03740</name>
</gene>
<dbReference type="EMBL" id="CP000886">
    <property type="protein sequence ID" value="ABX69075.1"/>
    <property type="molecule type" value="Genomic_DNA"/>
</dbReference>
<dbReference type="RefSeq" id="WP_001274930.1">
    <property type="nucleotide sequence ID" value="NC_010102.1"/>
</dbReference>
<dbReference type="SMR" id="A9N2M4"/>
<dbReference type="KEGG" id="spq:SPAB_03740"/>
<dbReference type="PATRIC" id="fig|1016998.12.peg.3521"/>
<dbReference type="HOGENOM" id="CLU_086669_0_0_6"/>
<dbReference type="BioCyc" id="SENT1016998:SPAB_RS15230-MONOMER"/>
<dbReference type="Proteomes" id="UP000008556">
    <property type="component" value="Chromosome"/>
</dbReference>
<dbReference type="GO" id="GO:0005737">
    <property type="term" value="C:cytoplasm"/>
    <property type="evidence" value="ECO:0007669"/>
    <property type="project" value="UniProtKB-SubCell"/>
</dbReference>
<dbReference type="GO" id="GO:0003677">
    <property type="term" value="F:DNA binding"/>
    <property type="evidence" value="ECO:0007669"/>
    <property type="project" value="InterPro"/>
</dbReference>
<dbReference type="GO" id="GO:0004519">
    <property type="term" value="F:endonuclease activity"/>
    <property type="evidence" value="ECO:0007669"/>
    <property type="project" value="UniProtKB-UniRule"/>
</dbReference>
<dbReference type="GO" id="GO:0006304">
    <property type="term" value="P:DNA modification"/>
    <property type="evidence" value="ECO:0007669"/>
    <property type="project" value="InterPro"/>
</dbReference>
<dbReference type="GO" id="GO:0006298">
    <property type="term" value="P:mismatch repair"/>
    <property type="evidence" value="ECO:0007669"/>
    <property type="project" value="UniProtKB-UniRule"/>
</dbReference>
<dbReference type="CDD" id="cd00583">
    <property type="entry name" value="MutH-like"/>
    <property type="match status" value="1"/>
</dbReference>
<dbReference type="FunFam" id="3.40.600.10:FF:000001">
    <property type="entry name" value="DNA mismatch repair protein MutH"/>
    <property type="match status" value="1"/>
</dbReference>
<dbReference type="Gene3D" id="3.40.600.10">
    <property type="entry name" value="DNA mismatch repair MutH/Restriction endonuclease, type II"/>
    <property type="match status" value="1"/>
</dbReference>
<dbReference type="HAMAP" id="MF_00759">
    <property type="entry name" value="MutH"/>
    <property type="match status" value="1"/>
</dbReference>
<dbReference type="InterPro" id="IPR004230">
    <property type="entry name" value="DNA_mismatch_repair_MutH"/>
</dbReference>
<dbReference type="InterPro" id="IPR011337">
    <property type="entry name" value="DNA_rep_MutH/RE_typeII_Sau3AI"/>
</dbReference>
<dbReference type="InterPro" id="IPR037057">
    <property type="entry name" value="DNA_rep_MutH/T2_RE_sf"/>
</dbReference>
<dbReference type="InterPro" id="IPR011335">
    <property type="entry name" value="Restrct_endonuc-II-like"/>
</dbReference>
<dbReference type="NCBIfam" id="TIGR02248">
    <property type="entry name" value="mutH_TIGR"/>
    <property type="match status" value="1"/>
</dbReference>
<dbReference type="NCBIfam" id="NF003458">
    <property type="entry name" value="PRK05070.1"/>
    <property type="match status" value="1"/>
</dbReference>
<dbReference type="Pfam" id="PF02976">
    <property type="entry name" value="MutH"/>
    <property type="match status" value="1"/>
</dbReference>
<dbReference type="SMART" id="SM00927">
    <property type="entry name" value="MutH"/>
    <property type="match status" value="1"/>
</dbReference>
<dbReference type="SUPFAM" id="SSF52980">
    <property type="entry name" value="Restriction endonuclease-like"/>
    <property type="match status" value="1"/>
</dbReference>
<name>MUTH_SALPB</name>
<comment type="function">
    <text evidence="1">Sequence-specific endonuclease that cleaves unmethylated GATC sequences. It is involved in DNA mismatch repair.</text>
</comment>
<comment type="subcellular location">
    <subcellularLocation>
        <location evidence="1">Cytoplasm</location>
    </subcellularLocation>
</comment>
<comment type="similarity">
    <text evidence="1">Belongs to the MutH family.</text>
</comment>
<accession>A9N2M4</accession>
<sequence>MSALCPLLTPPASEALLLAQARQLSGYTLGELAAMAGITTPKDLKRDKGWIGVLLEIWLGASAGSKPEQDFAALGVELKTIPVDSLGRPLETTFVCVAPLTGNSGVTWETSHVRHKLKRVLWVPVEGDRSIPLAERRVGSPLLWSPSEEEDRQLRLDWEELMDMIVLGQVERITARHGEVLQLRPKAANARALTEAIGARGEPILTLPRGFYLKKNFTQALLARHFLLQNP</sequence>
<reference key="1">
    <citation type="submission" date="2007-11" db="EMBL/GenBank/DDBJ databases">
        <authorList>
            <consortium name="The Salmonella enterica serovar Paratyphi B Genome Sequencing Project"/>
            <person name="McClelland M."/>
            <person name="Sanderson E.K."/>
            <person name="Porwollik S."/>
            <person name="Spieth J."/>
            <person name="Clifton W.S."/>
            <person name="Fulton R."/>
            <person name="Cordes M."/>
            <person name="Wollam A."/>
            <person name="Shah N."/>
            <person name="Pepin K."/>
            <person name="Bhonagiri V."/>
            <person name="Nash W."/>
            <person name="Johnson M."/>
            <person name="Thiruvilangam P."/>
            <person name="Wilson R."/>
        </authorList>
    </citation>
    <scope>NUCLEOTIDE SEQUENCE [LARGE SCALE GENOMIC DNA]</scope>
    <source>
        <strain>ATCC BAA-1250 / SPB7</strain>
    </source>
</reference>